<organism>
    <name type="scientific">Yersinia pestis bv. Antiqua (strain Antiqua)</name>
    <dbReference type="NCBI Taxonomy" id="360102"/>
    <lineage>
        <taxon>Bacteria</taxon>
        <taxon>Pseudomonadati</taxon>
        <taxon>Pseudomonadota</taxon>
        <taxon>Gammaproteobacteria</taxon>
        <taxon>Enterobacterales</taxon>
        <taxon>Yersiniaceae</taxon>
        <taxon>Yersinia</taxon>
    </lineage>
</organism>
<dbReference type="EC" id="5.4.99.62" evidence="1"/>
<dbReference type="EMBL" id="CP000308">
    <property type="protein sequence ID" value="ABG11979.1"/>
    <property type="molecule type" value="Genomic_DNA"/>
</dbReference>
<dbReference type="RefSeq" id="WP_002212252.1">
    <property type="nucleotide sequence ID" value="NZ_CP009906.1"/>
</dbReference>
<dbReference type="SMR" id="Q1CC43"/>
<dbReference type="GeneID" id="57974587"/>
<dbReference type="KEGG" id="ypa:YPA_0010"/>
<dbReference type="UniPathway" id="UPA00916">
    <property type="reaction ID" value="UER00888"/>
</dbReference>
<dbReference type="Proteomes" id="UP000001971">
    <property type="component" value="Chromosome"/>
</dbReference>
<dbReference type="GO" id="GO:0005829">
    <property type="term" value="C:cytosol"/>
    <property type="evidence" value="ECO:0007669"/>
    <property type="project" value="TreeGrafter"/>
</dbReference>
<dbReference type="GO" id="GO:0062193">
    <property type="term" value="F:D-ribose pyranase activity"/>
    <property type="evidence" value="ECO:0007669"/>
    <property type="project" value="UniProtKB-EC"/>
</dbReference>
<dbReference type="GO" id="GO:0016872">
    <property type="term" value="F:intramolecular lyase activity"/>
    <property type="evidence" value="ECO:0007669"/>
    <property type="project" value="UniProtKB-UniRule"/>
</dbReference>
<dbReference type="GO" id="GO:0048029">
    <property type="term" value="F:monosaccharide binding"/>
    <property type="evidence" value="ECO:0007669"/>
    <property type="project" value="InterPro"/>
</dbReference>
<dbReference type="GO" id="GO:0019303">
    <property type="term" value="P:D-ribose catabolic process"/>
    <property type="evidence" value="ECO:0007669"/>
    <property type="project" value="UniProtKB-UniRule"/>
</dbReference>
<dbReference type="FunFam" id="3.40.1650.10:FF:000002">
    <property type="entry name" value="D-ribose pyranase"/>
    <property type="match status" value="1"/>
</dbReference>
<dbReference type="Gene3D" id="3.40.1650.10">
    <property type="entry name" value="RbsD-like domain"/>
    <property type="match status" value="1"/>
</dbReference>
<dbReference type="HAMAP" id="MF_01661">
    <property type="entry name" value="D_rib_pyranase"/>
    <property type="match status" value="1"/>
</dbReference>
<dbReference type="InterPro" id="IPR023064">
    <property type="entry name" value="D-ribose_pyranase"/>
</dbReference>
<dbReference type="InterPro" id="IPR023750">
    <property type="entry name" value="RbsD-like_sf"/>
</dbReference>
<dbReference type="InterPro" id="IPR007721">
    <property type="entry name" value="RbsD_FucU"/>
</dbReference>
<dbReference type="NCBIfam" id="NF008761">
    <property type="entry name" value="PRK11797.1"/>
    <property type="match status" value="1"/>
</dbReference>
<dbReference type="PANTHER" id="PTHR37831">
    <property type="entry name" value="D-RIBOSE PYRANASE"/>
    <property type="match status" value="1"/>
</dbReference>
<dbReference type="PANTHER" id="PTHR37831:SF1">
    <property type="entry name" value="D-RIBOSE PYRANASE"/>
    <property type="match status" value="1"/>
</dbReference>
<dbReference type="Pfam" id="PF05025">
    <property type="entry name" value="RbsD_FucU"/>
    <property type="match status" value="1"/>
</dbReference>
<dbReference type="SUPFAM" id="SSF102546">
    <property type="entry name" value="RbsD-like"/>
    <property type="match status" value="1"/>
</dbReference>
<proteinExistence type="inferred from homology"/>
<comment type="function">
    <text evidence="1">Catalyzes the interconversion of beta-pyran and beta-furan forms of D-ribose.</text>
</comment>
<comment type="catalytic activity">
    <reaction evidence="1">
        <text>beta-D-ribopyranose = beta-D-ribofuranose</text>
        <dbReference type="Rhea" id="RHEA:25432"/>
        <dbReference type="ChEBI" id="CHEBI:27476"/>
        <dbReference type="ChEBI" id="CHEBI:47002"/>
        <dbReference type="EC" id="5.4.99.62"/>
    </reaction>
</comment>
<comment type="pathway">
    <text evidence="1">Carbohydrate metabolism; D-ribose degradation; D-ribose 5-phosphate from beta-D-ribopyranose: step 1/2.</text>
</comment>
<comment type="subunit">
    <text evidence="1">Homodecamer.</text>
</comment>
<comment type="subcellular location">
    <subcellularLocation>
        <location evidence="1">Cytoplasm</location>
    </subcellularLocation>
</comment>
<comment type="similarity">
    <text evidence="1">Belongs to the RbsD / FucU family. RbsD subfamily.</text>
</comment>
<keyword id="KW-0119">Carbohydrate metabolism</keyword>
<keyword id="KW-0963">Cytoplasm</keyword>
<keyword id="KW-0413">Isomerase</keyword>
<reference key="1">
    <citation type="journal article" date="2006" name="J. Bacteriol.">
        <title>Complete genome sequence of Yersinia pestis strains Antiqua and Nepal516: evidence of gene reduction in an emerging pathogen.</title>
        <authorList>
            <person name="Chain P.S.G."/>
            <person name="Hu P."/>
            <person name="Malfatti S.A."/>
            <person name="Radnedge L."/>
            <person name="Larimer F."/>
            <person name="Vergez L.M."/>
            <person name="Worsham P."/>
            <person name="Chu M.C."/>
            <person name="Andersen G.L."/>
        </authorList>
    </citation>
    <scope>NUCLEOTIDE SEQUENCE [LARGE SCALE GENOMIC DNA]</scope>
    <source>
        <strain>Antiqua</strain>
    </source>
</reference>
<accession>Q1CC43</accession>
<gene>
    <name evidence="1" type="primary">rbsD</name>
    <name type="ordered locus">YPA_0010</name>
</gene>
<feature type="chain" id="PRO_0000346304" description="D-ribose pyranase">
    <location>
        <begin position="1"/>
        <end position="139"/>
    </location>
</feature>
<feature type="active site" description="Proton donor" evidence="1">
    <location>
        <position position="20"/>
    </location>
</feature>
<feature type="binding site" evidence="1">
    <location>
        <position position="28"/>
    </location>
    <ligand>
        <name>substrate</name>
    </ligand>
</feature>
<feature type="binding site" evidence="1">
    <location>
        <position position="106"/>
    </location>
    <ligand>
        <name>substrate</name>
    </ligand>
</feature>
<feature type="binding site" evidence="1">
    <location>
        <begin position="128"/>
        <end position="130"/>
    </location>
    <ligand>
        <name>substrate</name>
    </ligand>
</feature>
<evidence type="ECO:0000255" key="1">
    <source>
        <dbReference type="HAMAP-Rule" id="MF_01661"/>
    </source>
</evidence>
<sequence>MKKGVLLNADISAVISRLGHTDQIVIGDAGLPIPATTTRIDLALTRGVPGFLQVVDVVTQEMQVENAYLAEEIVKNNPQLHEALLVLLTQLEQRQENQIALRYISHEAFKEQTKQSRAVIRSGECSPFANIILGSGVTF</sequence>
<name>RBSD_YERPA</name>
<protein>
    <recommendedName>
        <fullName evidence="1">D-ribose pyranase</fullName>
        <ecNumber evidence="1">5.4.99.62</ecNumber>
    </recommendedName>
</protein>